<name>PVK2_THEPT</name>
<comment type="function">
    <text evidence="4">Mediates visceral muscle contractile activity (myotropic activity).</text>
</comment>
<comment type="subcellular location">
    <subcellularLocation>
        <location evidence="4">Secreted</location>
    </subcellularLocation>
</comment>
<comment type="similarity">
    <text evidence="1">Belongs to the periviscerokinin family.</text>
</comment>
<sequence length="11" mass="1103">GSSGLISMPRV</sequence>
<evidence type="ECO:0000255" key="1"/>
<evidence type="ECO:0000269" key="2">
    <source>
    </source>
</evidence>
<evidence type="ECO:0000303" key="3">
    <source>
    </source>
</evidence>
<evidence type="ECO:0000305" key="4"/>
<organism>
    <name type="scientific">Therea petiveriana</name>
    <name type="common">Domino cockroach</name>
    <dbReference type="NCBI Taxonomy" id="45965"/>
    <lineage>
        <taxon>Eukaryota</taxon>
        <taxon>Metazoa</taxon>
        <taxon>Ecdysozoa</taxon>
        <taxon>Arthropoda</taxon>
        <taxon>Hexapoda</taxon>
        <taxon>Insecta</taxon>
        <taxon>Pterygota</taxon>
        <taxon>Neoptera</taxon>
        <taxon>Polyneoptera</taxon>
        <taxon>Dictyoptera</taxon>
        <taxon>Blattodea</taxon>
        <taxon>Corydioidea</taxon>
        <taxon>Corydiidae</taxon>
        <taxon>Therea</taxon>
    </lineage>
</organism>
<feature type="peptide" id="PRO_0000378815" description="Periviscerokinin-2" evidence="2">
    <location>
        <begin position="1"/>
        <end position="11"/>
    </location>
</feature>
<feature type="modified residue" description="Valine amide" evidence="2">
    <location>
        <position position="11"/>
    </location>
</feature>
<reference evidence="4" key="1">
    <citation type="journal article" date="2009" name="BMC Evol. Biol.">
        <title>A proteomic approach for studying insect phylogeny: CAPA peptides of ancient insect taxa (Dictyoptera, Blattoptera) as a test case.</title>
        <authorList>
            <person name="Roth S."/>
            <person name="Fromm B."/>
            <person name="Gaede G."/>
            <person name="Predel R."/>
        </authorList>
    </citation>
    <scope>PROTEIN SEQUENCE</scope>
    <scope>AMIDATION AT VAL-11</scope>
    <source>
        <tissue evidence="2">Abdominal perisympathetic organs</tissue>
    </source>
</reference>
<accession>P85788</accession>
<proteinExistence type="evidence at protein level"/>
<dbReference type="GO" id="GO:0005576">
    <property type="term" value="C:extracellular region"/>
    <property type="evidence" value="ECO:0007669"/>
    <property type="project" value="UniProtKB-SubCell"/>
</dbReference>
<dbReference type="GO" id="GO:0007218">
    <property type="term" value="P:neuropeptide signaling pathway"/>
    <property type="evidence" value="ECO:0007669"/>
    <property type="project" value="UniProtKB-KW"/>
</dbReference>
<dbReference type="InterPro" id="IPR013231">
    <property type="entry name" value="Periviscerokinin"/>
</dbReference>
<dbReference type="Pfam" id="PF08259">
    <property type="entry name" value="Periviscerokin"/>
    <property type="match status" value="1"/>
</dbReference>
<keyword id="KW-0027">Amidation</keyword>
<keyword id="KW-0903">Direct protein sequencing</keyword>
<keyword id="KW-0527">Neuropeptide</keyword>
<keyword id="KW-0964">Secreted</keyword>
<protein>
    <recommendedName>
        <fullName evidence="3">Periviscerokinin-2</fullName>
        <shortName evidence="3">ThePe-PVK-2</shortName>
    </recommendedName>
</protein>